<sequence>MSASHEQNSAAAPNGPNLSEALISLGNLRHNLACIRAITGPQCRVMGIVKANAYGHGATQVTATLEAEGVRDFGVANIYEAIELLQEHRMLPDSRILAFASPLAGHIDLYLQHGVEMTVCDHETARAAESIAAACGRRLQVQLKVDTGMGRLGVTPEEAAELLELIEACPNLELTGIYTHFAESDKPEGFTARQLERFLHVTGAYERRTGKTVTKHAANSGAIISMPDARLDMVRPGILLYGCHPVDAAPSTVPVRPVMQFQSRVIFVKEVPAGTAISYNRTWSAPKATRIATISAGYADGFHRALSNQARVSIGGKSFPQVGTITMDQTMVNLGSDDSVKVGDTAVLFGWDGPSAGEQALAAGTISYELLCSVSRRVRRIVV</sequence>
<keyword id="KW-0413">Isomerase</keyword>
<keyword id="KW-0663">Pyridoxal phosphate</keyword>
<keyword id="KW-1185">Reference proteome</keyword>
<accession>Q8KB67</accession>
<evidence type="ECO:0000255" key="1">
    <source>
        <dbReference type="HAMAP-Rule" id="MF_01201"/>
    </source>
</evidence>
<proteinExistence type="inferred from homology"/>
<protein>
    <recommendedName>
        <fullName evidence="1">Alanine racemase</fullName>
        <ecNumber evidence="1">5.1.1.1</ecNumber>
    </recommendedName>
</protein>
<name>ALR_CHLTE</name>
<comment type="function">
    <text evidence="1">Catalyzes the interconversion of L-alanine and D-alanine. May also act on other amino acids.</text>
</comment>
<comment type="catalytic activity">
    <reaction evidence="1">
        <text>L-alanine = D-alanine</text>
        <dbReference type="Rhea" id="RHEA:20249"/>
        <dbReference type="ChEBI" id="CHEBI:57416"/>
        <dbReference type="ChEBI" id="CHEBI:57972"/>
        <dbReference type="EC" id="5.1.1.1"/>
    </reaction>
</comment>
<comment type="cofactor">
    <cofactor evidence="1">
        <name>pyridoxal 5'-phosphate</name>
        <dbReference type="ChEBI" id="CHEBI:597326"/>
    </cofactor>
</comment>
<comment type="pathway">
    <text evidence="1">Amino-acid biosynthesis; D-alanine biosynthesis; D-alanine from L-alanine: step 1/1.</text>
</comment>
<comment type="similarity">
    <text evidence="1">Belongs to the alanine racemase family.</text>
</comment>
<gene>
    <name type="primary">alr</name>
    <name type="ordered locus">CT1922</name>
</gene>
<organism>
    <name type="scientific">Chlorobaculum tepidum (strain ATCC 49652 / DSM 12025 / NBRC 103806 / TLS)</name>
    <name type="common">Chlorobium tepidum</name>
    <dbReference type="NCBI Taxonomy" id="194439"/>
    <lineage>
        <taxon>Bacteria</taxon>
        <taxon>Pseudomonadati</taxon>
        <taxon>Chlorobiota</taxon>
        <taxon>Chlorobiia</taxon>
        <taxon>Chlorobiales</taxon>
        <taxon>Chlorobiaceae</taxon>
        <taxon>Chlorobaculum</taxon>
    </lineage>
</organism>
<reference key="1">
    <citation type="journal article" date="2002" name="Proc. Natl. Acad. Sci. U.S.A.">
        <title>The complete genome sequence of Chlorobium tepidum TLS, a photosynthetic, anaerobic, green-sulfur bacterium.</title>
        <authorList>
            <person name="Eisen J.A."/>
            <person name="Nelson K.E."/>
            <person name="Paulsen I.T."/>
            <person name="Heidelberg J.F."/>
            <person name="Wu M."/>
            <person name="Dodson R.J."/>
            <person name="DeBoy R.T."/>
            <person name="Gwinn M.L."/>
            <person name="Nelson W.C."/>
            <person name="Haft D.H."/>
            <person name="Hickey E.K."/>
            <person name="Peterson J.D."/>
            <person name="Durkin A.S."/>
            <person name="Kolonay J.F."/>
            <person name="Yang F."/>
            <person name="Holt I.E."/>
            <person name="Umayam L.A."/>
            <person name="Mason T.M."/>
            <person name="Brenner M."/>
            <person name="Shea T.P."/>
            <person name="Parksey D.S."/>
            <person name="Nierman W.C."/>
            <person name="Feldblyum T.V."/>
            <person name="Hansen C.L."/>
            <person name="Craven M.B."/>
            <person name="Radune D."/>
            <person name="Vamathevan J.J."/>
            <person name="Khouri H.M."/>
            <person name="White O."/>
            <person name="Gruber T.M."/>
            <person name="Ketchum K.A."/>
            <person name="Venter J.C."/>
            <person name="Tettelin H."/>
            <person name="Bryant D.A."/>
            <person name="Fraser C.M."/>
        </authorList>
    </citation>
    <scope>NUCLEOTIDE SEQUENCE [LARGE SCALE GENOMIC DNA]</scope>
    <source>
        <strain>ATCC 49652 / DSM 12025 / NBRC 103806 / TLS</strain>
    </source>
</reference>
<dbReference type="EC" id="5.1.1.1" evidence="1"/>
<dbReference type="EMBL" id="AE006470">
    <property type="protein sequence ID" value="AAM73141.1"/>
    <property type="molecule type" value="Genomic_DNA"/>
</dbReference>
<dbReference type="RefSeq" id="NP_662799.1">
    <property type="nucleotide sequence ID" value="NC_002932.3"/>
</dbReference>
<dbReference type="RefSeq" id="WP_010933580.1">
    <property type="nucleotide sequence ID" value="NC_002932.3"/>
</dbReference>
<dbReference type="SMR" id="Q8KB67"/>
<dbReference type="STRING" id="194439.CT1922"/>
<dbReference type="EnsemblBacteria" id="AAM73141">
    <property type="protein sequence ID" value="AAM73141"/>
    <property type="gene ID" value="CT1922"/>
</dbReference>
<dbReference type="KEGG" id="cte:CT1922"/>
<dbReference type="PATRIC" id="fig|194439.7.peg.1741"/>
<dbReference type="eggNOG" id="COG0787">
    <property type="taxonomic scope" value="Bacteria"/>
</dbReference>
<dbReference type="HOGENOM" id="CLU_028393_2_2_10"/>
<dbReference type="OrthoDB" id="9801978at2"/>
<dbReference type="UniPathway" id="UPA00042">
    <property type="reaction ID" value="UER00497"/>
</dbReference>
<dbReference type="Proteomes" id="UP000001007">
    <property type="component" value="Chromosome"/>
</dbReference>
<dbReference type="GO" id="GO:0005829">
    <property type="term" value="C:cytosol"/>
    <property type="evidence" value="ECO:0007669"/>
    <property type="project" value="TreeGrafter"/>
</dbReference>
<dbReference type="GO" id="GO:0008784">
    <property type="term" value="F:alanine racemase activity"/>
    <property type="evidence" value="ECO:0007669"/>
    <property type="project" value="UniProtKB-UniRule"/>
</dbReference>
<dbReference type="GO" id="GO:0030170">
    <property type="term" value="F:pyridoxal phosphate binding"/>
    <property type="evidence" value="ECO:0007669"/>
    <property type="project" value="UniProtKB-UniRule"/>
</dbReference>
<dbReference type="GO" id="GO:0030632">
    <property type="term" value="P:D-alanine biosynthetic process"/>
    <property type="evidence" value="ECO:0007669"/>
    <property type="project" value="UniProtKB-UniRule"/>
</dbReference>
<dbReference type="CDD" id="cd00430">
    <property type="entry name" value="PLPDE_III_AR"/>
    <property type="match status" value="1"/>
</dbReference>
<dbReference type="FunFam" id="3.20.20.10:FF:000002">
    <property type="entry name" value="Alanine racemase"/>
    <property type="match status" value="1"/>
</dbReference>
<dbReference type="Gene3D" id="3.20.20.10">
    <property type="entry name" value="Alanine racemase"/>
    <property type="match status" value="1"/>
</dbReference>
<dbReference type="Gene3D" id="2.40.37.10">
    <property type="entry name" value="Lyase, Ornithine Decarboxylase, Chain A, domain 1"/>
    <property type="match status" value="1"/>
</dbReference>
<dbReference type="HAMAP" id="MF_01201">
    <property type="entry name" value="Ala_racemase"/>
    <property type="match status" value="1"/>
</dbReference>
<dbReference type="InterPro" id="IPR000821">
    <property type="entry name" value="Ala_racemase"/>
</dbReference>
<dbReference type="InterPro" id="IPR009006">
    <property type="entry name" value="Ala_racemase/Decarboxylase_C"/>
</dbReference>
<dbReference type="InterPro" id="IPR011079">
    <property type="entry name" value="Ala_racemase_C"/>
</dbReference>
<dbReference type="InterPro" id="IPR001608">
    <property type="entry name" value="Ala_racemase_N"/>
</dbReference>
<dbReference type="InterPro" id="IPR020622">
    <property type="entry name" value="Ala_racemase_pyridoxalP-BS"/>
</dbReference>
<dbReference type="InterPro" id="IPR029066">
    <property type="entry name" value="PLP-binding_barrel"/>
</dbReference>
<dbReference type="NCBIfam" id="TIGR00492">
    <property type="entry name" value="alr"/>
    <property type="match status" value="1"/>
</dbReference>
<dbReference type="PANTHER" id="PTHR30511">
    <property type="entry name" value="ALANINE RACEMASE"/>
    <property type="match status" value="1"/>
</dbReference>
<dbReference type="PANTHER" id="PTHR30511:SF0">
    <property type="entry name" value="ALANINE RACEMASE, CATABOLIC-RELATED"/>
    <property type="match status" value="1"/>
</dbReference>
<dbReference type="Pfam" id="PF00842">
    <property type="entry name" value="Ala_racemase_C"/>
    <property type="match status" value="1"/>
</dbReference>
<dbReference type="Pfam" id="PF01168">
    <property type="entry name" value="Ala_racemase_N"/>
    <property type="match status" value="1"/>
</dbReference>
<dbReference type="PRINTS" id="PR00992">
    <property type="entry name" value="ALARACEMASE"/>
</dbReference>
<dbReference type="SMART" id="SM01005">
    <property type="entry name" value="Ala_racemase_C"/>
    <property type="match status" value="1"/>
</dbReference>
<dbReference type="SUPFAM" id="SSF50621">
    <property type="entry name" value="Alanine racemase C-terminal domain-like"/>
    <property type="match status" value="1"/>
</dbReference>
<dbReference type="SUPFAM" id="SSF51419">
    <property type="entry name" value="PLP-binding barrel"/>
    <property type="match status" value="1"/>
</dbReference>
<dbReference type="PROSITE" id="PS00395">
    <property type="entry name" value="ALANINE_RACEMASE"/>
    <property type="match status" value="1"/>
</dbReference>
<feature type="chain" id="PRO_0000114508" description="Alanine racemase">
    <location>
        <begin position="1"/>
        <end position="383"/>
    </location>
</feature>
<feature type="active site" description="Proton acceptor; specific for D-alanine" evidence="1">
    <location>
        <position position="50"/>
    </location>
</feature>
<feature type="active site" description="Proton acceptor; specific for L-alanine" evidence="1">
    <location>
        <position position="279"/>
    </location>
</feature>
<feature type="binding site" evidence="1">
    <location>
        <position position="151"/>
    </location>
    <ligand>
        <name>substrate</name>
    </ligand>
</feature>
<feature type="binding site" evidence="1">
    <location>
        <position position="327"/>
    </location>
    <ligand>
        <name>substrate</name>
    </ligand>
</feature>
<feature type="modified residue" description="N6-(pyridoxal phosphate)lysine" evidence="1">
    <location>
        <position position="50"/>
    </location>
</feature>